<name>TRUA_METTP</name>
<organism>
    <name type="scientific">Methanothrix thermoacetophila (strain DSM 6194 / JCM 14653 / NBRC 101360 / PT)</name>
    <name type="common">Methanosaeta thermophila</name>
    <dbReference type="NCBI Taxonomy" id="349307"/>
    <lineage>
        <taxon>Archaea</taxon>
        <taxon>Methanobacteriati</taxon>
        <taxon>Methanobacteriota</taxon>
        <taxon>Stenosarchaea group</taxon>
        <taxon>Methanomicrobia</taxon>
        <taxon>Methanotrichales</taxon>
        <taxon>Methanotrichaceae</taxon>
        <taxon>Methanothrix</taxon>
    </lineage>
</organism>
<proteinExistence type="inferred from homology"/>
<reference key="1">
    <citation type="submission" date="2006-10" db="EMBL/GenBank/DDBJ databases">
        <title>Complete sequence of Methanosaeta thermophila PT.</title>
        <authorList>
            <consortium name="US DOE Joint Genome Institute"/>
            <person name="Copeland A."/>
            <person name="Lucas S."/>
            <person name="Lapidus A."/>
            <person name="Barry K."/>
            <person name="Detter J.C."/>
            <person name="Glavina del Rio T."/>
            <person name="Hammon N."/>
            <person name="Israni S."/>
            <person name="Pitluck S."/>
            <person name="Chain P."/>
            <person name="Malfatti S."/>
            <person name="Shin M."/>
            <person name="Vergez L."/>
            <person name="Schmutz J."/>
            <person name="Larimer F."/>
            <person name="Land M."/>
            <person name="Hauser L."/>
            <person name="Kyrpides N."/>
            <person name="Kim E."/>
            <person name="Smith K.S."/>
            <person name="Ingram-Smith C."/>
            <person name="Richardson P."/>
        </authorList>
    </citation>
    <scope>NUCLEOTIDE SEQUENCE [LARGE SCALE GENOMIC DNA]</scope>
    <source>
        <strain>DSM 6194 / JCM 14653 / NBRC 101360 / PT</strain>
    </source>
</reference>
<evidence type="ECO:0000255" key="1">
    <source>
        <dbReference type="HAMAP-Rule" id="MF_00171"/>
    </source>
</evidence>
<dbReference type="EC" id="5.4.99.12" evidence="1"/>
<dbReference type="EMBL" id="CP000477">
    <property type="protein sequence ID" value="ABK14774.1"/>
    <property type="molecule type" value="Genomic_DNA"/>
</dbReference>
<dbReference type="RefSeq" id="WP_011696168.1">
    <property type="nucleotide sequence ID" value="NC_008553.1"/>
</dbReference>
<dbReference type="SMR" id="A0B7V0"/>
<dbReference type="STRING" id="349307.Mthe_0989"/>
<dbReference type="GeneID" id="4462865"/>
<dbReference type="KEGG" id="mtp:Mthe_0989"/>
<dbReference type="HOGENOM" id="CLU_014673_4_2_2"/>
<dbReference type="OrthoDB" id="25720at2157"/>
<dbReference type="Proteomes" id="UP000000674">
    <property type="component" value="Chromosome"/>
</dbReference>
<dbReference type="GO" id="GO:0003723">
    <property type="term" value="F:RNA binding"/>
    <property type="evidence" value="ECO:0007669"/>
    <property type="project" value="InterPro"/>
</dbReference>
<dbReference type="GO" id="GO:0160147">
    <property type="term" value="F:tRNA pseudouridine(38-40) synthase activity"/>
    <property type="evidence" value="ECO:0007669"/>
    <property type="project" value="UniProtKB-EC"/>
</dbReference>
<dbReference type="GO" id="GO:0031119">
    <property type="term" value="P:tRNA pseudouridine synthesis"/>
    <property type="evidence" value="ECO:0007669"/>
    <property type="project" value="UniProtKB-UniRule"/>
</dbReference>
<dbReference type="Gene3D" id="3.30.70.660">
    <property type="entry name" value="Pseudouridine synthase I, catalytic domain, C-terminal subdomain"/>
    <property type="match status" value="1"/>
</dbReference>
<dbReference type="Gene3D" id="3.30.70.580">
    <property type="entry name" value="Pseudouridine synthase I, catalytic domain, N-terminal subdomain"/>
    <property type="match status" value="1"/>
</dbReference>
<dbReference type="HAMAP" id="MF_00171">
    <property type="entry name" value="TruA"/>
    <property type="match status" value="1"/>
</dbReference>
<dbReference type="InterPro" id="IPR020103">
    <property type="entry name" value="PsdUridine_synth_cat_dom_sf"/>
</dbReference>
<dbReference type="InterPro" id="IPR001406">
    <property type="entry name" value="PsdUridine_synth_TruA"/>
</dbReference>
<dbReference type="InterPro" id="IPR020097">
    <property type="entry name" value="PsdUridine_synth_TruA_a/b_dom"/>
</dbReference>
<dbReference type="InterPro" id="IPR020095">
    <property type="entry name" value="PsdUridine_synth_TruA_C"/>
</dbReference>
<dbReference type="InterPro" id="IPR020094">
    <property type="entry name" value="TruA/RsuA/RluB/E/F_N"/>
</dbReference>
<dbReference type="NCBIfam" id="TIGR00071">
    <property type="entry name" value="hisT_truA"/>
    <property type="match status" value="1"/>
</dbReference>
<dbReference type="PANTHER" id="PTHR11142">
    <property type="entry name" value="PSEUDOURIDYLATE SYNTHASE"/>
    <property type="match status" value="1"/>
</dbReference>
<dbReference type="PANTHER" id="PTHR11142:SF0">
    <property type="entry name" value="TRNA PSEUDOURIDINE SYNTHASE-LIKE 1"/>
    <property type="match status" value="1"/>
</dbReference>
<dbReference type="Pfam" id="PF01416">
    <property type="entry name" value="PseudoU_synth_1"/>
    <property type="match status" value="2"/>
</dbReference>
<dbReference type="PIRSF" id="PIRSF001430">
    <property type="entry name" value="tRNA_psdUrid_synth"/>
    <property type="match status" value="1"/>
</dbReference>
<dbReference type="SUPFAM" id="SSF55120">
    <property type="entry name" value="Pseudouridine synthase"/>
    <property type="match status" value="1"/>
</dbReference>
<comment type="function">
    <text evidence="1">Formation of pseudouridine at positions 38, 39 and 40 in the anticodon stem and loop of transfer RNAs.</text>
</comment>
<comment type="catalytic activity">
    <reaction evidence="1">
        <text>uridine(38/39/40) in tRNA = pseudouridine(38/39/40) in tRNA</text>
        <dbReference type="Rhea" id="RHEA:22376"/>
        <dbReference type="Rhea" id="RHEA-COMP:10085"/>
        <dbReference type="Rhea" id="RHEA-COMP:10087"/>
        <dbReference type="ChEBI" id="CHEBI:65314"/>
        <dbReference type="ChEBI" id="CHEBI:65315"/>
        <dbReference type="EC" id="5.4.99.12"/>
    </reaction>
</comment>
<comment type="similarity">
    <text evidence="1">Belongs to the tRNA pseudouridine synthase TruA family.</text>
</comment>
<feature type="chain" id="PRO_1000017117" description="tRNA pseudouridine synthase A">
    <location>
        <begin position="1"/>
        <end position="267"/>
    </location>
</feature>
<feature type="active site" description="Nucleophile" evidence="1">
    <location>
        <position position="51"/>
    </location>
</feature>
<feature type="binding site" evidence="1">
    <location>
        <position position="109"/>
    </location>
    <ligand>
        <name>substrate</name>
    </ligand>
</feature>
<keyword id="KW-0413">Isomerase</keyword>
<keyword id="KW-1185">Reference proteome</keyword>
<keyword id="KW-0819">tRNA processing</keyword>
<protein>
    <recommendedName>
        <fullName evidence="1">tRNA pseudouridine synthase A</fullName>
        <ecNumber evidence="1">5.4.99.12</ecNumber>
    </recommendedName>
    <alternativeName>
        <fullName evidence="1">tRNA pseudouridine(38-40) synthase</fullName>
    </alternativeName>
    <alternativeName>
        <fullName evidence="1">tRNA pseudouridylate synthase I</fullName>
    </alternativeName>
    <alternativeName>
        <fullName evidence="1">tRNA-uridine isomerase I</fullName>
    </alternativeName>
</protein>
<gene>
    <name evidence="1" type="primary">truA</name>
    <name type="ordered locus">Mthe_0989</name>
</gene>
<accession>A0B7V0</accession>
<sequence>MKIALKIAYLGDRYYGFQRQPGLRTVESVMRDALLRIGVANGDFCYAGRTDRGVSALGQVIDFWIEEDRAYLAFPRVINSLLPSDVWAWARAVAPVGFSARWSALWREYRYFLFSPDIDLSAVREAAGHLVGTHDFRNFSMSKVDTVRRIISIDVNAHCGIVVFDVRAEGFIWNMVRRIVGALELIGIGEKPVDWILELLDPSTPHGAPTAPPEGLMLMDVGYSDLEWEEDRYTKQRVSRMLISEARRRAAMSGVIQEMLRRMRDTF</sequence>